<protein>
    <recommendedName>
        <fullName>Nitrogen permease regulator 3</fullName>
    </recommendedName>
    <alternativeName>
        <fullName>Required for meiotic nuclear division protein 11</fullName>
    </alternativeName>
</protein>
<accession>Q4WTC7</accession>
<feature type="signal peptide" evidence="2">
    <location>
        <begin position="1"/>
        <end position="23"/>
    </location>
</feature>
<feature type="chain" id="PRO_0000301792" description="Nitrogen permease regulator 3">
    <location>
        <begin position="24"/>
        <end position="843"/>
    </location>
</feature>
<feature type="region of interest" description="Disordered" evidence="3">
    <location>
        <begin position="30"/>
        <end position="174"/>
    </location>
</feature>
<feature type="region of interest" description="Disordered" evidence="3">
    <location>
        <begin position="222"/>
        <end position="272"/>
    </location>
</feature>
<feature type="region of interest" description="Disordered" evidence="3">
    <location>
        <begin position="657"/>
        <end position="706"/>
    </location>
</feature>
<feature type="region of interest" description="Disordered" evidence="3">
    <location>
        <begin position="749"/>
        <end position="768"/>
    </location>
</feature>
<feature type="compositionally biased region" description="Basic residues" evidence="3">
    <location>
        <begin position="43"/>
        <end position="52"/>
    </location>
</feature>
<feature type="compositionally biased region" description="Low complexity" evidence="3">
    <location>
        <begin position="62"/>
        <end position="73"/>
    </location>
</feature>
<feature type="compositionally biased region" description="Low complexity" evidence="3">
    <location>
        <begin position="84"/>
        <end position="106"/>
    </location>
</feature>
<feature type="compositionally biased region" description="Basic residues" evidence="3">
    <location>
        <begin position="223"/>
        <end position="234"/>
    </location>
</feature>
<feature type="compositionally biased region" description="Basic and acidic residues" evidence="3">
    <location>
        <begin position="235"/>
        <end position="247"/>
    </location>
</feature>
<feature type="compositionally biased region" description="Acidic residues" evidence="3">
    <location>
        <begin position="248"/>
        <end position="258"/>
    </location>
</feature>
<feature type="compositionally biased region" description="Gly residues" evidence="3">
    <location>
        <begin position="259"/>
        <end position="269"/>
    </location>
</feature>
<feature type="compositionally biased region" description="Acidic residues" evidence="3">
    <location>
        <begin position="667"/>
        <end position="676"/>
    </location>
</feature>
<feature type="compositionally biased region" description="Low complexity" evidence="3">
    <location>
        <begin position="677"/>
        <end position="693"/>
    </location>
</feature>
<gene>
    <name type="primary">npr3</name>
    <name type="synonym">rmd11</name>
    <name type="ORF">AFUA_1G09760</name>
</gene>
<organism>
    <name type="scientific">Aspergillus fumigatus (strain ATCC MYA-4609 / CBS 101355 / FGSC A1100 / Af293)</name>
    <name type="common">Neosartorya fumigata</name>
    <dbReference type="NCBI Taxonomy" id="330879"/>
    <lineage>
        <taxon>Eukaryota</taxon>
        <taxon>Fungi</taxon>
        <taxon>Dikarya</taxon>
        <taxon>Ascomycota</taxon>
        <taxon>Pezizomycotina</taxon>
        <taxon>Eurotiomycetes</taxon>
        <taxon>Eurotiomycetidae</taxon>
        <taxon>Eurotiales</taxon>
        <taxon>Aspergillaceae</taxon>
        <taxon>Aspergillus</taxon>
        <taxon>Aspergillus subgen. Fumigati</taxon>
    </lineage>
</organism>
<reference key="1">
    <citation type="journal article" date="2005" name="Nature">
        <title>Genomic sequence of the pathogenic and allergenic filamentous fungus Aspergillus fumigatus.</title>
        <authorList>
            <person name="Nierman W.C."/>
            <person name="Pain A."/>
            <person name="Anderson M.J."/>
            <person name="Wortman J.R."/>
            <person name="Kim H.S."/>
            <person name="Arroyo J."/>
            <person name="Berriman M."/>
            <person name="Abe K."/>
            <person name="Archer D.B."/>
            <person name="Bermejo C."/>
            <person name="Bennett J.W."/>
            <person name="Bowyer P."/>
            <person name="Chen D."/>
            <person name="Collins M."/>
            <person name="Coulsen R."/>
            <person name="Davies R."/>
            <person name="Dyer P.S."/>
            <person name="Farman M.L."/>
            <person name="Fedorova N."/>
            <person name="Fedorova N.D."/>
            <person name="Feldblyum T.V."/>
            <person name="Fischer R."/>
            <person name="Fosker N."/>
            <person name="Fraser A."/>
            <person name="Garcia J.L."/>
            <person name="Garcia M.J."/>
            <person name="Goble A."/>
            <person name="Goldman G.H."/>
            <person name="Gomi K."/>
            <person name="Griffith-Jones S."/>
            <person name="Gwilliam R."/>
            <person name="Haas B.J."/>
            <person name="Haas H."/>
            <person name="Harris D.E."/>
            <person name="Horiuchi H."/>
            <person name="Huang J."/>
            <person name="Humphray S."/>
            <person name="Jimenez J."/>
            <person name="Keller N."/>
            <person name="Khouri H."/>
            <person name="Kitamoto K."/>
            <person name="Kobayashi T."/>
            <person name="Konzack S."/>
            <person name="Kulkarni R."/>
            <person name="Kumagai T."/>
            <person name="Lafton A."/>
            <person name="Latge J.-P."/>
            <person name="Li W."/>
            <person name="Lord A."/>
            <person name="Lu C."/>
            <person name="Majoros W.H."/>
            <person name="May G.S."/>
            <person name="Miller B.L."/>
            <person name="Mohamoud Y."/>
            <person name="Molina M."/>
            <person name="Monod M."/>
            <person name="Mouyna I."/>
            <person name="Mulligan S."/>
            <person name="Murphy L.D."/>
            <person name="O'Neil S."/>
            <person name="Paulsen I."/>
            <person name="Penalva M.A."/>
            <person name="Pertea M."/>
            <person name="Price C."/>
            <person name="Pritchard B.L."/>
            <person name="Quail M.A."/>
            <person name="Rabbinowitsch E."/>
            <person name="Rawlins N."/>
            <person name="Rajandream M.A."/>
            <person name="Reichard U."/>
            <person name="Renauld H."/>
            <person name="Robson G.D."/>
            <person name="Rodriguez de Cordoba S."/>
            <person name="Rodriguez-Pena J.M."/>
            <person name="Ronning C.M."/>
            <person name="Rutter S."/>
            <person name="Salzberg S.L."/>
            <person name="Sanchez M."/>
            <person name="Sanchez-Ferrero J.C."/>
            <person name="Saunders D."/>
            <person name="Seeger K."/>
            <person name="Squares R."/>
            <person name="Squares S."/>
            <person name="Takeuchi M."/>
            <person name="Tekaia F."/>
            <person name="Turner G."/>
            <person name="Vazquez de Aldana C.R."/>
            <person name="Weidman J."/>
            <person name="White O."/>
            <person name="Woodward J.R."/>
            <person name="Yu J.-H."/>
            <person name="Fraser C.M."/>
            <person name="Galagan J.E."/>
            <person name="Asai K."/>
            <person name="Machida M."/>
            <person name="Hall N."/>
            <person name="Barrell B.G."/>
            <person name="Denning D.W."/>
        </authorList>
    </citation>
    <scope>NUCLEOTIDE SEQUENCE [LARGE SCALE GENOMIC DNA]</scope>
    <source>
        <strain>ATCC MYA-4609 / CBS 101355 / FGSC A1100 / Af293</strain>
    </source>
</reference>
<name>NPR3_ASPFU</name>
<dbReference type="EMBL" id="AAHF01000004">
    <property type="protein sequence ID" value="EAL90305.2"/>
    <property type="molecule type" value="Genomic_DNA"/>
</dbReference>
<dbReference type="RefSeq" id="XP_752343.2">
    <property type="nucleotide sequence ID" value="XM_747250.2"/>
</dbReference>
<dbReference type="SMR" id="Q4WTC7"/>
<dbReference type="FunCoup" id="Q4WTC7">
    <property type="interactions" value="93"/>
</dbReference>
<dbReference type="STRING" id="330879.Q4WTC7"/>
<dbReference type="EnsemblFungi" id="EAL90305">
    <property type="protein sequence ID" value="EAL90305"/>
    <property type="gene ID" value="AFUA_1G09760"/>
</dbReference>
<dbReference type="GeneID" id="3510523"/>
<dbReference type="KEGG" id="afm:AFUA_1G09760"/>
<dbReference type="VEuPathDB" id="FungiDB:Afu1g09760"/>
<dbReference type="eggNOG" id="KOG3830">
    <property type="taxonomic scope" value="Eukaryota"/>
</dbReference>
<dbReference type="HOGENOM" id="CLU_014314_1_0_1"/>
<dbReference type="InParanoid" id="Q4WTC7"/>
<dbReference type="OMA" id="RTDYVWK"/>
<dbReference type="OrthoDB" id="18648at2759"/>
<dbReference type="Proteomes" id="UP000002530">
    <property type="component" value="Chromosome 1"/>
</dbReference>
<dbReference type="GO" id="GO:1990130">
    <property type="term" value="C:GATOR1 complex"/>
    <property type="evidence" value="ECO:0000318"/>
    <property type="project" value="GO_Central"/>
</dbReference>
<dbReference type="GO" id="GO:0034198">
    <property type="term" value="P:cellular response to amino acid starvation"/>
    <property type="evidence" value="ECO:0000318"/>
    <property type="project" value="GO_Central"/>
</dbReference>
<dbReference type="GO" id="GO:0051321">
    <property type="term" value="P:meiotic cell cycle"/>
    <property type="evidence" value="ECO:0007669"/>
    <property type="project" value="UniProtKB-KW"/>
</dbReference>
<dbReference type="GO" id="GO:1904262">
    <property type="term" value="P:negative regulation of TORC1 signaling"/>
    <property type="evidence" value="ECO:0000318"/>
    <property type="project" value="GO_Central"/>
</dbReference>
<dbReference type="GO" id="GO:0010508">
    <property type="term" value="P:positive regulation of autophagy"/>
    <property type="evidence" value="ECO:0000318"/>
    <property type="project" value="GO_Central"/>
</dbReference>
<dbReference type="InterPro" id="IPR056603">
    <property type="entry name" value="HTH_NPRL3"/>
</dbReference>
<dbReference type="InterPro" id="IPR005365">
    <property type="entry name" value="Npr3"/>
</dbReference>
<dbReference type="PANTHER" id="PTHR13153">
    <property type="entry name" value="CGTHBA PROTEIN -14 GENE PROTEIN"/>
    <property type="match status" value="1"/>
</dbReference>
<dbReference type="PANTHER" id="PTHR13153:SF5">
    <property type="entry name" value="GATOR COMPLEX PROTEIN NPRL3"/>
    <property type="match status" value="1"/>
</dbReference>
<dbReference type="Pfam" id="PF24064">
    <property type="entry name" value="HTH_NPRL3"/>
    <property type="match status" value="1"/>
</dbReference>
<dbReference type="Pfam" id="PF03666">
    <property type="entry name" value="NPR3"/>
    <property type="match status" value="1"/>
</dbReference>
<sequence>MSSIARPPDPCLVAIILIVRSRAGPRLVFHYPPNPLSENGLRPARKERRTSRSKNGQDYKSNESSSSEESGSSSDDDEDEHQRQLQSQSQSQSHLSGSVVSGRRSSNFGLDDHVAMSVSPGGDSQRAGSMGSGSGRTSFRKRGGNSDVEEDSGAASDRQEDGSGGAGGPYRPPWESLLGLPADVWEKLLSPSPAWHKRRFEVGINDLAFIGWPVFVREDGTWRKQRRKKKKKRRADWEGGELGHNENAEDAPDDEDGDAGGNASGGGGLMAASTETLSPKQVTLSEAKRGSGSSGKAARSLVDCLDGDDKDSMTMFNVVFVLDPPLLEYSMRTKEVYDNIIKKFAKALKWEQARTDYVWREAQHISHLKEKAKERRTSLNTLYTELITQSSLARAIYTVHTSISASKIASVPLSPDVSISLQIPPLTSTPYLPGPTDKAYPGLWLTTADSVTPVEDPTADEYTAPHQVLAKHFALLLLDNEAAILRDVEASGGALAPALAHYLRCSKPTKSFAQISASSGIPLSTIQMLASHLVYWRRARAIPPIHQRDTYIVSPNCDLSKLEVATAAYQAAFPTLPSLPKMLSALSGTPRPYGSFIPSKDHKETYFAILAWLLRGGWVTQLRSFARVKVTPEIKMAVEVALRREEVDKYLRKGRSLEAQKSTDGENGNEEDENDDASSSSSSSLASQGSGEETPMPGRYQQESNPRLSHSMLDRNTSLRTSSLILFPHRASPLESRWLEQIVSRFPEHPRSAGRHRRGEGSNAGGGEIDPEYAALSTPMKDLWPTYIKYFNGLDALEKIPVREGLKRKFVWQVLTRLGLVTSQQSSIELDPREQVLVSVRHW</sequence>
<evidence type="ECO:0000250" key="1"/>
<evidence type="ECO:0000255" key="2"/>
<evidence type="ECO:0000256" key="3">
    <source>
        <dbReference type="SAM" id="MobiDB-lite"/>
    </source>
</evidence>
<evidence type="ECO:0000305" key="4"/>
<keyword id="KW-0469">Meiosis</keyword>
<keyword id="KW-1185">Reference proteome</keyword>
<keyword id="KW-0732">Signal</keyword>
<comment type="function">
    <text evidence="1">Mediates inactivation of the TORC1 complex in response to amino acid starvation. Required for meiotic nuclear division (By similarity).</text>
</comment>
<comment type="similarity">
    <text evidence="4">Belongs to the NPR3 family.</text>
</comment>
<proteinExistence type="inferred from homology"/>